<sequence length="1714" mass="188749">MSSIDISGRYALNDLEMVSKYQTAYACEGKKLTIECDPGDVINLIRANYGRFSITICNDHGNVEWSVNCMFPKSLTVLNSRCAHKQSCSVLAATSMFGDPCPGTHKYLEAHYQCISAAQTSTTTNRPSPPPWVLNNGPPIFGNGSGLIHPPGSPGAAPPPPRLPTLPGVVGISGNGGLFNVPPPHTVTHSTPSSSTVPGRMKGVATSTTTTKNPAGRHDGLPPPPQLHHHHTHHGEEAAPPTKPSSKLPSAGNATAPSNTRILTGVGGSGTDDGTLLTTKSSPNRPPVTASNGSPASGNNSVVRTINNINMNAAGMSGADDESKLFCGPTHARNLFWNMTRVGDVNVQPCPGGAAGIAKWRCVLMKRLPDSGYDEYDDDPSSTTPAPSGGDCLHNSSSCDPPVSMAHKVNQRLRNFEPTWHPMTPDLTQCRSLWLNNLELRVNQRDSSLISIANDMSEVTSSKTLYGGDMLVTTKIIQTVSEKMLHDKETFPDQRQREAMIMELLHCVVKTGSNLLDESQLSSWLDLNPEDQMRVATSLLTGLEYNAFLLADTIIRERSVVQKVKNILLSVRVLETKTIPPSVIFPDSDQWPLSSDRIELPRAALLDNSEGGLVRIVFAAFDRLESILKPSYDHFDLKSSRSYVRNTAILANDSSDSNTGEIQQRIRILNSKVISASLGKGRHIQLSQPITLTLKHLKTENVTNPTCVFWNYIDHAWSANGCSLESTNRTHSVCSCNHLTNFAILMDVVDEHQHSLFTMFDGNMRVFIYISIAICVVFIVIALLTLKLFNGVFVKSARTTIYTSIYVCLLAIELLFLLGIEQTETSIFCGFITVFLHCAILSGAAWFCYEAFHSYYTLTSDELLVEVDQTPKVNWYYLLSYGLSVSVVAISVAINPSTYTQNDYCVLMEANILFYATFVAPVLIFFVAAIGYTFLSWIIMCRKSCTGLKTKEHTRLASVRFDIRCSFVFLLLLSAVWCSAYFYLRGAKTDEDTTTIYGYCFICFNTLLGLYIFVFHCIQNEKIRREYRKYVRQHAWLPKCLRCSKTSISSGIVAGGGPAAGTLCSVNTSKKPKLPLGVSEEVHGEQQQHQQAMGVPAPEDAIMGATSDCELNEAQQRRTLKSGLMTGTLQTPQQPLAGHVVLERGSTLRSTGHASPTSSAGSTHLIFAHKQQQQQQALGESYYHQPDYYSWKQPPQGGLKSQREYYNNAGVAASSPQQAHEVFYWTQKPNSQHGKKKRGGAVPASPSGSLHSRTAAASQVLFYPSYKKTKQGQPSGYPHYAEALDPPHSAGAAFYQQQQQMRRQQQQQQQQQQQQLSSDEEQAEQHAHLLHLQHQQQHQRRVGGQQQLPAPPPHMAHFQQEFMQRQFRNKTSNCDLAMGGDTYHNQGSEGGADVCPVYEEILSNRNSDVQHYEVGDFDVDEVYNNSVGTGVFNSMRAAITAGGSRYGGGSLSGGSVSSRSQQQQLQKQQKQQQQQQQRSARRCTADDDDDDDEEEDDEATAAEQLHDSVCDDDDEEEDSDLDDDAHKLPPQSDERMRRLMAMQDEDFKRRFQRQQRKNGASIDYGALPPGVAPGAGSAGPHPDHNRAVFGVSGGVGEGSMRGAYRQQQQQQQQQLNAKSPSARLAVNELFGHGNAGPPLPPANQTPAQKRQQLQKLSPQSTTSSSSHTSHSNLQPHPHPLTHQHPHPPQHQQRHLSAMLDENNTVRCYLEPLAK</sequence>
<protein>
    <recommendedName>
        <fullName evidence="1">Latrophilin Cirl</fullName>
    </recommendedName>
</protein>
<name>LPHN_DROAN</name>
<accession>B3MFV7</accession>
<reference evidence="7" key="1">
    <citation type="journal article" date="2007" name="Nature">
        <title>Evolution of genes and genomes on the Drosophila phylogeny.</title>
        <authorList>
            <consortium name="Drosophila 12 genomes consortium"/>
        </authorList>
    </citation>
    <scope>NUCLEOTIDE SEQUENCE [LARGE SCALE GENOMIC DNA]</scope>
    <source>
        <strain evidence="7">Tucson 14024-0371.13</strain>
    </source>
</reference>
<proteinExistence type="inferred from homology"/>
<dbReference type="EMBL" id="CH902619">
    <property type="protein sequence ID" value="EDV35639.1"/>
    <property type="molecule type" value="Genomic_DNA"/>
</dbReference>
<dbReference type="SMR" id="B3MFV7"/>
<dbReference type="FunCoup" id="B3MFV7">
    <property type="interactions" value="560"/>
</dbReference>
<dbReference type="STRING" id="7217.B3MFV7"/>
<dbReference type="MEROPS" id="P02.A01"/>
<dbReference type="GlyCosmos" id="B3MFV7">
    <property type="glycosylation" value="8 sites, No reported glycans"/>
</dbReference>
<dbReference type="EnsemblMetazoa" id="FBtr0392654">
    <property type="protein sequence ID" value="FBpp0352014"/>
    <property type="gene ID" value="FBgn0089406"/>
</dbReference>
<dbReference type="EnsemblMetazoa" id="XM_014907705.3">
    <property type="protein sequence ID" value="XP_014763191.1"/>
    <property type="gene ID" value="LOC6495220"/>
</dbReference>
<dbReference type="GeneID" id="6495220"/>
<dbReference type="KEGG" id="dan:6495220"/>
<dbReference type="CTD" id="35846"/>
<dbReference type="eggNOG" id="KOG4193">
    <property type="taxonomic scope" value="Eukaryota"/>
</dbReference>
<dbReference type="eggNOG" id="KOG4729">
    <property type="taxonomic scope" value="Eukaryota"/>
</dbReference>
<dbReference type="HOGENOM" id="CLU_003272_0_0_1"/>
<dbReference type="InParanoid" id="B3MFV7"/>
<dbReference type="OMA" id="NMRVFIY"/>
<dbReference type="OrthoDB" id="1100386at2759"/>
<dbReference type="PhylomeDB" id="B3MFV7"/>
<dbReference type="ChiTaRS" id="Cirl">
    <property type="organism name" value="fly"/>
</dbReference>
<dbReference type="Proteomes" id="UP000007801">
    <property type="component" value="Unassembled WGS sequence"/>
</dbReference>
<dbReference type="GO" id="GO:0005886">
    <property type="term" value="C:plasma membrane"/>
    <property type="evidence" value="ECO:0007669"/>
    <property type="project" value="UniProtKB-SubCell"/>
</dbReference>
<dbReference type="GO" id="GO:0030246">
    <property type="term" value="F:carbohydrate binding"/>
    <property type="evidence" value="ECO:0007669"/>
    <property type="project" value="UniProtKB-KW"/>
</dbReference>
<dbReference type="GO" id="GO:0004930">
    <property type="term" value="F:G protein-coupled receptor activity"/>
    <property type="evidence" value="ECO:0007669"/>
    <property type="project" value="UniProtKB-KW"/>
</dbReference>
<dbReference type="GO" id="GO:0007166">
    <property type="term" value="P:cell surface receptor signaling pathway"/>
    <property type="evidence" value="ECO:0007669"/>
    <property type="project" value="InterPro"/>
</dbReference>
<dbReference type="CDD" id="cd22830">
    <property type="entry name" value="Gal_Rha_Lectin_dCirl"/>
    <property type="match status" value="1"/>
</dbReference>
<dbReference type="FunFam" id="2.60.120.740:FF:000001">
    <property type="entry name" value="Adhesion G protein-coupled receptor L2"/>
    <property type="match status" value="1"/>
</dbReference>
<dbReference type="FunFam" id="1.25.40.610:FF:000006">
    <property type="entry name" value="latrophilin Cirl isoform X2"/>
    <property type="match status" value="1"/>
</dbReference>
<dbReference type="FunFam" id="2.60.220.50:FF:000024">
    <property type="entry name" value="latrophilin Cirl isoform X2"/>
    <property type="match status" value="1"/>
</dbReference>
<dbReference type="Gene3D" id="1.25.40.610">
    <property type="match status" value="1"/>
</dbReference>
<dbReference type="Gene3D" id="2.60.120.740">
    <property type="match status" value="1"/>
</dbReference>
<dbReference type="Gene3D" id="2.60.220.50">
    <property type="match status" value="1"/>
</dbReference>
<dbReference type="Gene3D" id="4.10.1240.10">
    <property type="entry name" value="GPCR, family 2, extracellular hormone receptor domain"/>
    <property type="match status" value="1"/>
</dbReference>
<dbReference type="Gene3D" id="1.20.1070.10">
    <property type="entry name" value="Rhodopsin 7-helix transmembrane proteins"/>
    <property type="match status" value="1"/>
</dbReference>
<dbReference type="InterPro" id="IPR057244">
    <property type="entry name" value="GAIN_B"/>
</dbReference>
<dbReference type="InterPro" id="IPR032471">
    <property type="entry name" value="GAIN_dom_N"/>
</dbReference>
<dbReference type="InterPro" id="IPR046338">
    <property type="entry name" value="GAIN_dom_sf"/>
</dbReference>
<dbReference type="InterPro" id="IPR017981">
    <property type="entry name" value="GPCR_2-like_7TM"/>
</dbReference>
<dbReference type="InterPro" id="IPR036445">
    <property type="entry name" value="GPCR_2_extracell_dom_sf"/>
</dbReference>
<dbReference type="InterPro" id="IPR000832">
    <property type="entry name" value="GPCR_2_secretin-like"/>
</dbReference>
<dbReference type="InterPro" id="IPR000203">
    <property type="entry name" value="GPS"/>
</dbReference>
<dbReference type="InterPro" id="IPR000922">
    <property type="entry name" value="Lectin_gal-bd_dom"/>
</dbReference>
<dbReference type="InterPro" id="IPR043159">
    <property type="entry name" value="Lectin_gal-bd_sf"/>
</dbReference>
<dbReference type="PANTHER" id="PTHR12011">
    <property type="entry name" value="ADHESION G-PROTEIN COUPLED RECEPTOR"/>
    <property type="match status" value="1"/>
</dbReference>
<dbReference type="PANTHER" id="PTHR12011:SF475">
    <property type="entry name" value="LATROPHILIN CIRL"/>
    <property type="match status" value="1"/>
</dbReference>
<dbReference type="Pfam" id="PF00002">
    <property type="entry name" value="7tm_2"/>
    <property type="match status" value="1"/>
</dbReference>
<dbReference type="Pfam" id="PF16489">
    <property type="entry name" value="GAIN"/>
    <property type="match status" value="1"/>
</dbReference>
<dbReference type="Pfam" id="PF01825">
    <property type="entry name" value="GPS"/>
    <property type="match status" value="1"/>
</dbReference>
<dbReference type="Pfam" id="PF02140">
    <property type="entry name" value="SUEL_Lectin"/>
    <property type="match status" value="1"/>
</dbReference>
<dbReference type="SMART" id="SM00303">
    <property type="entry name" value="GPS"/>
    <property type="match status" value="1"/>
</dbReference>
<dbReference type="SUPFAM" id="SSF81321">
    <property type="entry name" value="Family A G protein-coupled receptor-like"/>
    <property type="match status" value="1"/>
</dbReference>
<dbReference type="PROSITE" id="PS50261">
    <property type="entry name" value="G_PROTEIN_RECEP_F2_4"/>
    <property type="match status" value="1"/>
</dbReference>
<dbReference type="PROSITE" id="PS50221">
    <property type="entry name" value="GAIN_B"/>
    <property type="match status" value="1"/>
</dbReference>
<dbReference type="PROSITE" id="PS50228">
    <property type="entry name" value="SUEL_LECTIN"/>
    <property type="match status" value="1"/>
</dbReference>
<evidence type="ECO:0000250" key="1">
    <source>
        <dbReference type="UniProtKB" id="A1Z7G7"/>
    </source>
</evidence>
<evidence type="ECO:0000250" key="2">
    <source>
        <dbReference type="UniProtKB" id="O88923"/>
    </source>
</evidence>
<evidence type="ECO:0000255" key="3"/>
<evidence type="ECO:0000255" key="4">
    <source>
        <dbReference type="PROSITE-ProRule" id="PRU00098"/>
    </source>
</evidence>
<evidence type="ECO:0000255" key="5">
    <source>
        <dbReference type="PROSITE-ProRule" id="PRU00260"/>
    </source>
</evidence>
<evidence type="ECO:0000256" key="6">
    <source>
        <dbReference type="SAM" id="MobiDB-lite"/>
    </source>
</evidence>
<evidence type="ECO:0000312" key="7">
    <source>
        <dbReference type="EMBL" id="EDV35639.1"/>
    </source>
</evidence>
<feature type="chain" id="PRO_0000393372" description="Latrophilin Cirl">
    <location>
        <begin position="1"/>
        <end position="1714"/>
    </location>
</feature>
<feature type="topological domain" description="Extracellular" evidence="3">
    <location>
        <begin position="1"/>
        <end position="765"/>
    </location>
</feature>
<feature type="transmembrane region" description="Helical; Name=1" evidence="3">
    <location>
        <begin position="766"/>
        <end position="786"/>
    </location>
</feature>
<feature type="topological domain" description="Cytoplasmic" evidence="3">
    <location>
        <begin position="787"/>
        <end position="799"/>
    </location>
</feature>
<feature type="transmembrane region" description="Helical; Name=2" evidence="3">
    <location>
        <begin position="800"/>
        <end position="820"/>
    </location>
</feature>
<feature type="topological domain" description="Extracellular" evidence="3">
    <location>
        <begin position="821"/>
        <end position="826"/>
    </location>
</feature>
<feature type="transmembrane region" description="Helical; Name=3" evidence="3">
    <location>
        <begin position="827"/>
        <end position="847"/>
    </location>
</feature>
<feature type="topological domain" description="Cytoplasmic" evidence="3">
    <location>
        <begin position="848"/>
        <end position="873"/>
    </location>
</feature>
<feature type="transmembrane region" description="Helical; Name=4" evidence="3">
    <location>
        <begin position="874"/>
        <end position="894"/>
    </location>
</feature>
<feature type="topological domain" description="Extracellular" evidence="3">
    <location>
        <begin position="895"/>
        <end position="911"/>
    </location>
</feature>
<feature type="transmembrane region" description="Helical; Name=5" evidence="3">
    <location>
        <begin position="912"/>
        <end position="932"/>
    </location>
</feature>
<feature type="topological domain" description="Cytoplasmic" evidence="3">
    <location>
        <begin position="933"/>
        <end position="966"/>
    </location>
</feature>
<feature type="transmembrane region" description="Helical; Name=6" evidence="3">
    <location>
        <begin position="967"/>
        <end position="987"/>
    </location>
</feature>
<feature type="topological domain" description="Extracellular" evidence="3">
    <location>
        <begin position="988"/>
        <end position="994"/>
    </location>
</feature>
<feature type="transmembrane region" description="Helical; Name=7" evidence="3">
    <location>
        <begin position="995"/>
        <end position="1015"/>
    </location>
</feature>
<feature type="topological domain" description="Cytoplasmic" evidence="3">
    <location>
        <begin position="1016"/>
        <end position="1714"/>
    </location>
</feature>
<feature type="domain" description="SUEL-type lectin" evidence="5">
    <location>
        <begin position="26"/>
        <end position="115"/>
    </location>
</feature>
<feature type="domain" description="GAIN-B" evidence="4">
    <location>
        <begin position="558"/>
        <end position="752"/>
    </location>
</feature>
<feature type="region of interest" description="Disordered" evidence="6">
    <location>
        <begin position="183"/>
        <end position="302"/>
    </location>
</feature>
<feature type="region of interest" description="Disordered" evidence="6">
    <location>
        <begin position="373"/>
        <end position="397"/>
    </location>
</feature>
<feature type="region of interest" description="GPS" evidence="4">
    <location>
        <begin position="707"/>
        <end position="752"/>
    </location>
</feature>
<feature type="region of interest" description="Disordered" evidence="6">
    <location>
        <begin position="1229"/>
        <end position="1253"/>
    </location>
</feature>
<feature type="region of interest" description="Disordered" evidence="6">
    <location>
        <begin position="1268"/>
        <end position="1287"/>
    </location>
</feature>
<feature type="region of interest" description="Disordered" evidence="6">
    <location>
        <begin position="1293"/>
        <end position="1354"/>
    </location>
</feature>
<feature type="region of interest" description="Disordered" evidence="6">
    <location>
        <begin position="1447"/>
        <end position="1536"/>
    </location>
</feature>
<feature type="region of interest" description="Disordered" evidence="6">
    <location>
        <begin position="1551"/>
        <end position="1694"/>
    </location>
</feature>
<feature type="compositionally biased region" description="Low complexity" evidence="6">
    <location>
        <begin position="186"/>
        <end position="198"/>
    </location>
</feature>
<feature type="compositionally biased region" description="Polar residues" evidence="6">
    <location>
        <begin position="244"/>
        <end position="262"/>
    </location>
</feature>
<feature type="compositionally biased region" description="Low complexity" evidence="6">
    <location>
        <begin position="272"/>
        <end position="282"/>
    </location>
</feature>
<feature type="compositionally biased region" description="Low complexity" evidence="6">
    <location>
        <begin position="290"/>
        <end position="301"/>
    </location>
</feature>
<feature type="compositionally biased region" description="Low complexity" evidence="6">
    <location>
        <begin position="1296"/>
        <end position="1315"/>
    </location>
</feature>
<feature type="compositionally biased region" description="Low complexity" evidence="6">
    <location>
        <begin position="1330"/>
        <end position="1348"/>
    </location>
</feature>
<feature type="compositionally biased region" description="Low complexity" evidence="6">
    <location>
        <begin position="1453"/>
        <end position="1478"/>
    </location>
</feature>
<feature type="compositionally biased region" description="Acidic residues" evidence="6">
    <location>
        <begin position="1486"/>
        <end position="1500"/>
    </location>
</feature>
<feature type="compositionally biased region" description="Acidic residues" evidence="6">
    <location>
        <begin position="1510"/>
        <end position="1523"/>
    </location>
</feature>
<feature type="compositionally biased region" description="Basic and acidic residues" evidence="6">
    <location>
        <begin position="1524"/>
        <end position="1536"/>
    </location>
</feature>
<feature type="compositionally biased region" description="Low complexity" evidence="6">
    <location>
        <begin position="1565"/>
        <end position="1580"/>
    </location>
</feature>
<feature type="compositionally biased region" description="Polar residues" evidence="6">
    <location>
        <begin position="1644"/>
        <end position="1659"/>
    </location>
</feature>
<feature type="compositionally biased region" description="Low complexity" evidence="6">
    <location>
        <begin position="1660"/>
        <end position="1675"/>
    </location>
</feature>
<feature type="compositionally biased region" description="Basic residues" evidence="6">
    <location>
        <begin position="1679"/>
        <end position="1693"/>
    </location>
</feature>
<feature type="site" description="Cleavage; by autolysis" evidence="4">
    <location>
        <begin position="739"/>
        <end position="740"/>
    </location>
</feature>
<feature type="modified residue" description="Phosphoserine" evidence="1">
    <location>
        <position position="1155"/>
    </location>
</feature>
<feature type="modified residue" description="Phosphoserine" evidence="1">
    <location>
        <position position="1245"/>
    </location>
</feature>
<feature type="modified residue" description="Phosphoserine" evidence="1">
    <location>
        <position position="1252"/>
    </location>
</feature>
<feature type="modified residue" description="Phosphoserine" evidence="1">
    <location>
        <position position="1317"/>
    </location>
</feature>
<feature type="modified residue" description="Phosphoserine" evidence="1">
    <location>
        <position position="1318"/>
    </location>
</feature>
<feature type="glycosylation site" description="N-linked (GlcNAc...) asparagine" evidence="3">
    <location>
        <position position="143"/>
    </location>
</feature>
<feature type="glycosylation site" description="N-linked (GlcNAc...) asparagine" evidence="3">
    <location>
        <position position="253"/>
    </location>
</feature>
<feature type="glycosylation site" description="N-linked (GlcNAc...) asparagine" evidence="3">
    <location>
        <position position="299"/>
    </location>
</feature>
<feature type="glycosylation site" description="N-linked (GlcNAc...) asparagine" evidence="3">
    <location>
        <position position="338"/>
    </location>
</feature>
<feature type="glycosylation site" description="N-linked (GlcNAc...) asparagine" evidence="3">
    <location>
        <position position="395"/>
    </location>
</feature>
<feature type="glycosylation site" description="N-linked (GlcNAc...) asparagine" evidence="3">
    <location>
        <position position="652"/>
    </location>
</feature>
<feature type="glycosylation site" description="N-linked (GlcNAc...) asparagine" evidence="3">
    <location>
        <position position="701"/>
    </location>
</feature>
<feature type="glycosylation site" description="N-linked (GlcNAc...) asparagine" evidence="3">
    <location>
        <position position="728"/>
    </location>
</feature>
<feature type="disulfide bond" evidence="4">
    <location>
        <begin position="707"/>
        <end position="734"/>
    </location>
</feature>
<feature type="disulfide bond" evidence="4">
    <location>
        <begin position="722"/>
        <end position="736"/>
    </location>
</feature>
<organism>
    <name type="scientific">Drosophila ananassae</name>
    <name type="common">Fruit fly</name>
    <dbReference type="NCBI Taxonomy" id="7217"/>
    <lineage>
        <taxon>Eukaryota</taxon>
        <taxon>Metazoa</taxon>
        <taxon>Ecdysozoa</taxon>
        <taxon>Arthropoda</taxon>
        <taxon>Hexapoda</taxon>
        <taxon>Insecta</taxon>
        <taxon>Pterygota</taxon>
        <taxon>Neoptera</taxon>
        <taxon>Endopterygota</taxon>
        <taxon>Diptera</taxon>
        <taxon>Brachycera</taxon>
        <taxon>Muscomorpha</taxon>
        <taxon>Ephydroidea</taxon>
        <taxon>Drosophilidae</taxon>
        <taxon>Drosophila</taxon>
        <taxon>Sophophora</taxon>
    </lineage>
</organism>
<keyword id="KW-1003">Cell membrane</keyword>
<keyword id="KW-1015">Disulfide bond</keyword>
<keyword id="KW-0297">G-protein coupled receptor</keyword>
<keyword id="KW-0325">Glycoprotein</keyword>
<keyword id="KW-0430">Lectin</keyword>
<keyword id="KW-0472">Membrane</keyword>
<keyword id="KW-0597">Phosphoprotein</keyword>
<keyword id="KW-0675">Receptor</keyword>
<keyword id="KW-1185">Reference proteome</keyword>
<keyword id="KW-0807">Transducer</keyword>
<keyword id="KW-0812">Transmembrane</keyword>
<keyword id="KW-1133">Transmembrane helix</keyword>
<comment type="subunit">
    <text evidence="2">Forms a heterodimer, consisting of a large extracellular region non-covalently linked to a seven-transmembrane moiety.</text>
</comment>
<comment type="subcellular location">
    <subcellularLocation>
        <location evidence="3">Cell membrane</location>
        <topology evidence="2 3">Multi-pass membrane protein</topology>
    </subcellularLocation>
</comment>
<comment type="PTM">
    <text evidence="2">Proteolytically cleaved into 2 subunits, an extracellular subunit and a seven-transmembrane subunit.</text>
</comment>
<comment type="similarity">
    <text evidence="3">Belongs to the G-protein coupled receptor 2 family. LN-TM7 subfamily.</text>
</comment>
<gene>
    <name evidence="1" type="primary">Cirl</name>
    <name type="ORF">GF12369</name>
</gene>